<protein>
    <recommendedName>
        <fullName evidence="1">Ribosomal protein L11 methyltransferase</fullName>
        <shortName evidence="1">L11 Mtase</shortName>
        <ecNumber evidence="1">2.1.1.-</ecNumber>
    </recommendedName>
</protein>
<proteinExistence type="inferred from homology"/>
<gene>
    <name evidence="1" type="primary">prmA</name>
    <name type="ordered locus">Pcryo_1648</name>
</gene>
<name>PRMA_PSYCK</name>
<sequence>MAWQQLHLQCEKDNVDLAEALLLEAGALSIALDDAGDQPLFEPLPGESPLWDEVILTGLFDATIETGTRDVIEQLSHEIAAQVQASRSWVSAVDDKDWEREWMSNYKPIECANDLWIVPNWLTPPNPEATNIIMDPGLAFGTGYHATTRLCLDWLTEQDLTDKVVIDYGCGSGILGIAALLLGARHVYAVDIDPQAVLATNQNAARNSVDNRLQAFLPEDFTAFWQQQNIAPVAVMVANILAKPLIGLAPYFVTLMAPKSRIVLAGLIESQTEQVTEAYQPYFALDPKHAFTAQEDQHWQRLSGTFTG</sequence>
<dbReference type="EC" id="2.1.1.-" evidence="1"/>
<dbReference type="EMBL" id="CP000323">
    <property type="protein sequence ID" value="ABE75425.1"/>
    <property type="molecule type" value="Genomic_DNA"/>
</dbReference>
<dbReference type="RefSeq" id="WP_011513974.1">
    <property type="nucleotide sequence ID" value="NC_007969.1"/>
</dbReference>
<dbReference type="SMR" id="Q1QA78"/>
<dbReference type="STRING" id="335284.Pcryo_1648"/>
<dbReference type="KEGG" id="pcr:Pcryo_1648"/>
<dbReference type="eggNOG" id="COG2264">
    <property type="taxonomic scope" value="Bacteria"/>
</dbReference>
<dbReference type="HOGENOM" id="CLU_049382_4_1_6"/>
<dbReference type="Proteomes" id="UP000002425">
    <property type="component" value="Chromosome"/>
</dbReference>
<dbReference type="GO" id="GO:0005737">
    <property type="term" value="C:cytoplasm"/>
    <property type="evidence" value="ECO:0007669"/>
    <property type="project" value="UniProtKB-SubCell"/>
</dbReference>
<dbReference type="GO" id="GO:0016279">
    <property type="term" value="F:protein-lysine N-methyltransferase activity"/>
    <property type="evidence" value="ECO:0007669"/>
    <property type="project" value="TreeGrafter"/>
</dbReference>
<dbReference type="GO" id="GO:0032259">
    <property type="term" value="P:methylation"/>
    <property type="evidence" value="ECO:0007669"/>
    <property type="project" value="UniProtKB-KW"/>
</dbReference>
<dbReference type="CDD" id="cd02440">
    <property type="entry name" value="AdoMet_MTases"/>
    <property type="match status" value="1"/>
</dbReference>
<dbReference type="Gene3D" id="3.40.50.150">
    <property type="entry name" value="Vaccinia Virus protein VP39"/>
    <property type="match status" value="1"/>
</dbReference>
<dbReference type="HAMAP" id="MF_00735">
    <property type="entry name" value="Methyltr_PrmA"/>
    <property type="match status" value="1"/>
</dbReference>
<dbReference type="InterPro" id="IPR050078">
    <property type="entry name" value="Ribosomal_L11_MeTrfase_PrmA"/>
</dbReference>
<dbReference type="InterPro" id="IPR004498">
    <property type="entry name" value="Ribosomal_PrmA_MeTrfase"/>
</dbReference>
<dbReference type="InterPro" id="IPR029063">
    <property type="entry name" value="SAM-dependent_MTases_sf"/>
</dbReference>
<dbReference type="NCBIfam" id="TIGR00406">
    <property type="entry name" value="prmA"/>
    <property type="match status" value="1"/>
</dbReference>
<dbReference type="PANTHER" id="PTHR43648">
    <property type="entry name" value="ELECTRON TRANSFER FLAVOPROTEIN BETA SUBUNIT LYSINE METHYLTRANSFERASE"/>
    <property type="match status" value="1"/>
</dbReference>
<dbReference type="PANTHER" id="PTHR43648:SF1">
    <property type="entry name" value="ELECTRON TRANSFER FLAVOPROTEIN BETA SUBUNIT LYSINE METHYLTRANSFERASE"/>
    <property type="match status" value="1"/>
</dbReference>
<dbReference type="Pfam" id="PF06325">
    <property type="entry name" value="PrmA"/>
    <property type="match status" value="1"/>
</dbReference>
<dbReference type="PIRSF" id="PIRSF000401">
    <property type="entry name" value="RPL11_MTase"/>
    <property type="match status" value="1"/>
</dbReference>
<dbReference type="SUPFAM" id="SSF53335">
    <property type="entry name" value="S-adenosyl-L-methionine-dependent methyltransferases"/>
    <property type="match status" value="1"/>
</dbReference>
<organism>
    <name type="scientific">Psychrobacter cryohalolentis (strain ATCC BAA-1226 / DSM 17306 / VKM B-2378 / K5)</name>
    <dbReference type="NCBI Taxonomy" id="335284"/>
    <lineage>
        <taxon>Bacteria</taxon>
        <taxon>Pseudomonadati</taxon>
        <taxon>Pseudomonadota</taxon>
        <taxon>Gammaproteobacteria</taxon>
        <taxon>Moraxellales</taxon>
        <taxon>Moraxellaceae</taxon>
        <taxon>Psychrobacter</taxon>
    </lineage>
</organism>
<keyword id="KW-0963">Cytoplasm</keyword>
<keyword id="KW-0489">Methyltransferase</keyword>
<keyword id="KW-0949">S-adenosyl-L-methionine</keyword>
<keyword id="KW-0808">Transferase</keyword>
<comment type="function">
    <text evidence="1">Methylates ribosomal protein L11.</text>
</comment>
<comment type="catalytic activity">
    <reaction evidence="1">
        <text>L-lysyl-[protein] + 3 S-adenosyl-L-methionine = N(6),N(6),N(6)-trimethyl-L-lysyl-[protein] + 3 S-adenosyl-L-homocysteine + 3 H(+)</text>
        <dbReference type="Rhea" id="RHEA:54192"/>
        <dbReference type="Rhea" id="RHEA-COMP:9752"/>
        <dbReference type="Rhea" id="RHEA-COMP:13826"/>
        <dbReference type="ChEBI" id="CHEBI:15378"/>
        <dbReference type="ChEBI" id="CHEBI:29969"/>
        <dbReference type="ChEBI" id="CHEBI:57856"/>
        <dbReference type="ChEBI" id="CHEBI:59789"/>
        <dbReference type="ChEBI" id="CHEBI:61961"/>
    </reaction>
</comment>
<comment type="subcellular location">
    <subcellularLocation>
        <location evidence="1">Cytoplasm</location>
    </subcellularLocation>
</comment>
<comment type="similarity">
    <text evidence="1">Belongs to the methyltransferase superfamily. PrmA family.</text>
</comment>
<evidence type="ECO:0000255" key="1">
    <source>
        <dbReference type="HAMAP-Rule" id="MF_00735"/>
    </source>
</evidence>
<feature type="chain" id="PRO_1000046074" description="Ribosomal protein L11 methyltransferase">
    <location>
        <begin position="1"/>
        <end position="308"/>
    </location>
</feature>
<feature type="binding site" evidence="1">
    <location>
        <position position="148"/>
    </location>
    <ligand>
        <name>S-adenosyl-L-methionine</name>
        <dbReference type="ChEBI" id="CHEBI:59789"/>
    </ligand>
</feature>
<feature type="binding site" evidence="1">
    <location>
        <position position="169"/>
    </location>
    <ligand>
        <name>S-adenosyl-L-methionine</name>
        <dbReference type="ChEBI" id="CHEBI:59789"/>
    </ligand>
</feature>
<feature type="binding site" evidence="1">
    <location>
        <position position="191"/>
    </location>
    <ligand>
        <name>S-adenosyl-L-methionine</name>
        <dbReference type="ChEBI" id="CHEBI:59789"/>
    </ligand>
</feature>
<feature type="binding site" evidence="1">
    <location>
        <position position="239"/>
    </location>
    <ligand>
        <name>S-adenosyl-L-methionine</name>
        <dbReference type="ChEBI" id="CHEBI:59789"/>
    </ligand>
</feature>
<reference key="1">
    <citation type="submission" date="2006-03" db="EMBL/GenBank/DDBJ databases">
        <title>Complete sequence of chromosome of Psychrobacter cryohalolentis K5.</title>
        <authorList>
            <consortium name="US DOE Joint Genome Institute"/>
            <person name="Copeland A."/>
            <person name="Lucas S."/>
            <person name="Lapidus A."/>
            <person name="Barry K."/>
            <person name="Detter J.C."/>
            <person name="Glavina T."/>
            <person name="Hammon N."/>
            <person name="Israni S."/>
            <person name="Dalin E."/>
            <person name="Tice H."/>
            <person name="Pitluck S."/>
            <person name="Brettin T."/>
            <person name="Bruce D."/>
            <person name="Han C."/>
            <person name="Tapia R."/>
            <person name="Sims D.R."/>
            <person name="Gilna P."/>
            <person name="Schmutz J."/>
            <person name="Larimer F."/>
            <person name="Land M."/>
            <person name="Hauser L."/>
            <person name="Kyrpides N."/>
            <person name="Kim E."/>
            <person name="Richardson P."/>
        </authorList>
    </citation>
    <scope>NUCLEOTIDE SEQUENCE [LARGE SCALE GENOMIC DNA]</scope>
    <source>
        <strain>ATCC BAA-1226 / DSM 17306 / VKM B-2378 / K5</strain>
    </source>
</reference>
<accession>Q1QA78</accession>